<gene>
    <name evidence="20" type="primary">SSH1</name>
    <name type="synonym">KIAA1298</name>
    <name type="synonym">SSH1L</name>
</gene>
<reference key="1">
    <citation type="journal article" date="2002" name="Cell">
        <title>Control of actin reorganization by Slingshot, a family of phosphatases that dephosphorylate ADF/cofilin.</title>
        <authorList>
            <person name="Niwa R."/>
            <person name="Nagata-Ohashi K."/>
            <person name="Takeichi M."/>
            <person name="Mizuno K."/>
            <person name="Uemura T."/>
        </authorList>
    </citation>
    <scope>NUCLEOTIDE SEQUENCE [MRNA] (ISOFORMS 1; 2 AND 3)</scope>
    <scope>FUNCTION</scope>
    <scope>CATALYTIC ACTIVITY</scope>
    <scope>INTERACTION WITH ACTIN</scope>
    <scope>MUTAGENESIS OF CYS-393</scope>
</reference>
<reference key="2">
    <citation type="journal article" date="2000" name="DNA Res.">
        <title>Prediction of the coding sequences of unidentified human genes. XVI. The complete sequences of 150 new cDNA clones from brain which code for large proteins in vitro.</title>
        <authorList>
            <person name="Nagase T."/>
            <person name="Kikuno R."/>
            <person name="Ishikawa K."/>
            <person name="Hirosawa M."/>
            <person name="Ohara O."/>
        </authorList>
    </citation>
    <scope>NUCLEOTIDE SEQUENCE [LARGE SCALE MRNA] (ISOFORM 4)</scope>
    <source>
        <tissue>Brain</tissue>
    </source>
</reference>
<reference key="3">
    <citation type="journal article" date="2004" name="Nat. Genet.">
        <title>Complete sequencing and characterization of 21,243 full-length human cDNAs.</title>
        <authorList>
            <person name="Ota T."/>
            <person name="Suzuki Y."/>
            <person name="Nishikawa T."/>
            <person name="Otsuki T."/>
            <person name="Sugiyama T."/>
            <person name="Irie R."/>
            <person name="Wakamatsu A."/>
            <person name="Hayashi K."/>
            <person name="Sato H."/>
            <person name="Nagai K."/>
            <person name="Kimura K."/>
            <person name="Makita H."/>
            <person name="Sekine M."/>
            <person name="Obayashi M."/>
            <person name="Nishi T."/>
            <person name="Shibahara T."/>
            <person name="Tanaka T."/>
            <person name="Ishii S."/>
            <person name="Yamamoto J."/>
            <person name="Saito K."/>
            <person name="Kawai Y."/>
            <person name="Isono Y."/>
            <person name="Nakamura Y."/>
            <person name="Nagahari K."/>
            <person name="Murakami K."/>
            <person name="Yasuda T."/>
            <person name="Iwayanagi T."/>
            <person name="Wagatsuma M."/>
            <person name="Shiratori A."/>
            <person name="Sudo H."/>
            <person name="Hosoiri T."/>
            <person name="Kaku Y."/>
            <person name="Kodaira H."/>
            <person name="Kondo H."/>
            <person name="Sugawara M."/>
            <person name="Takahashi M."/>
            <person name="Kanda K."/>
            <person name="Yokoi T."/>
            <person name="Furuya T."/>
            <person name="Kikkawa E."/>
            <person name="Omura Y."/>
            <person name="Abe K."/>
            <person name="Kamihara K."/>
            <person name="Katsuta N."/>
            <person name="Sato K."/>
            <person name="Tanikawa M."/>
            <person name="Yamazaki M."/>
            <person name="Ninomiya K."/>
            <person name="Ishibashi T."/>
            <person name="Yamashita H."/>
            <person name="Murakawa K."/>
            <person name="Fujimori K."/>
            <person name="Tanai H."/>
            <person name="Kimata M."/>
            <person name="Watanabe M."/>
            <person name="Hiraoka S."/>
            <person name="Chiba Y."/>
            <person name="Ishida S."/>
            <person name="Ono Y."/>
            <person name="Takiguchi S."/>
            <person name="Watanabe S."/>
            <person name="Yosida M."/>
            <person name="Hotuta T."/>
            <person name="Kusano J."/>
            <person name="Kanehori K."/>
            <person name="Takahashi-Fujii A."/>
            <person name="Hara H."/>
            <person name="Tanase T.-O."/>
            <person name="Nomura Y."/>
            <person name="Togiya S."/>
            <person name="Komai F."/>
            <person name="Hara R."/>
            <person name="Takeuchi K."/>
            <person name="Arita M."/>
            <person name="Imose N."/>
            <person name="Musashino K."/>
            <person name="Yuuki H."/>
            <person name="Oshima A."/>
            <person name="Sasaki N."/>
            <person name="Aotsuka S."/>
            <person name="Yoshikawa Y."/>
            <person name="Matsunawa H."/>
            <person name="Ichihara T."/>
            <person name="Shiohata N."/>
            <person name="Sano S."/>
            <person name="Moriya S."/>
            <person name="Momiyama H."/>
            <person name="Satoh N."/>
            <person name="Takami S."/>
            <person name="Terashima Y."/>
            <person name="Suzuki O."/>
            <person name="Nakagawa S."/>
            <person name="Senoh A."/>
            <person name="Mizoguchi H."/>
            <person name="Goto Y."/>
            <person name="Shimizu F."/>
            <person name="Wakebe H."/>
            <person name="Hishigaki H."/>
            <person name="Watanabe T."/>
            <person name="Sugiyama A."/>
            <person name="Takemoto M."/>
            <person name="Kawakami B."/>
            <person name="Yamazaki M."/>
            <person name="Watanabe K."/>
            <person name="Kumagai A."/>
            <person name="Itakura S."/>
            <person name="Fukuzumi Y."/>
            <person name="Fujimori Y."/>
            <person name="Komiyama M."/>
            <person name="Tashiro H."/>
            <person name="Tanigami A."/>
            <person name="Fujiwara T."/>
            <person name="Ono T."/>
            <person name="Yamada K."/>
            <person name="Fujii Y."/>
            <person name="Ozaki K."/>
            <person name="Hirao M."/>
            <person name="Ohmori Y."/>
            <person name="Kawabata A."/>
            <person name="Hikiji T."/>
            <person name="Kobatake N."/>
            <person name="Inagaki H."/>
            <person name="Ikema Y."/>
            <person name="Okamoto S."/>
            <person name="Okitani R."/>
            <person name="Kawakami T."/>
            <person name="Noguchi S."/>
            <person name="Itoh T."/>
            <person name="Shigeta K."/>
            <person name="Senba T."/>
            <person name="Matsumura K."/>
            <person name="Nakajima Y."/>
            <person name="Mizuno T."/>
            <person name="Morinaga M."/>
            <person name="Sasaki M."/>
            <person name="Togashi T."/>
            <person name="Oyama M."/>
            <person name="Hata H."/>
            <person name="Watanabe M."/>
            <person name="Komatsu T."/>
            <person name="Mizushima-Sugano J."/>
            <person name="Satoh T."/>
            <person name="Shirai Y."/>
            <person name="Takahashi Y."/>
            <person name="Nakagawa K."/>
            <person name="Okumura K."/>
            <person name="Nagase T."/>
            <person name="Nomura N."/>
            <person name="Kikuchi H."/>
            <person name="Masuho Y."/>
            <person name="Yamashita R."/>
            <person name="Nakai K."/>
            <person name="Yada T."/>
            <person name="Nakamura Y."/>
            <person name="Ohara O."/>
            <person name="Isogai T."/>
            <person name="Sugano S."/>
        </authorList>
    </citation>
    <scope>NUCLEOTIDE SEQUENCE [LARGE SCALE MRNA] (ISOFORM 5)</scope>
</reference>
<reference key="4">
    <citation type="journal article" date="2004" name="Genome Res.">
        <title>The status, quality, and expansion of the NIH full-length cDNA project: the Mammalian Gene Collection (MGC).</title>
        <authorList>
            <consortium name="The MGC Project Team"/>
        </authorList>
    </citation>
    <scope>NUCLEOTIDE SEQUENCE [LARGE SCALE MRNA] (ISOFORM 1)</scope>
    <source>
        <tissue>Eye</tissue>
    </source>
</reference>
<reference key="5">
    <citation type="journal article" date="2003" name="Genes Cells">
        <title>Differential activities, subcellular distribution and tissue expression patterns of three members of Slingshot family phosphatases that dephosphorylate cofilin.</title>
        <authorList>
            <person name="Ohta Y."/>
            <person name="Kousaka K."/>
            <person name="Nagata-Ohashi K."/>
            <person name="Ohashi K."/>
            <person name="Muramoto A."/>
            <person name="Shima Y."/>
            <person name="Niwa R."/>
            <person name="Uemura T."/>
            <person name="Mizuno K."/>
        </authorList>
    </citation>
    <scope>FUNCTION</scope>
    <scope>INTERACTION WITH ACTIN</scope>
</reference>
<reference key="6">
    <citation type="journal article" date="2003" name="J. Biol. Chem.">
        <title>Cell cycle-associated changes in Slingshot phosphatase activity and roles in cytokinesis in animal cells.</title>
        <authorList>
            <person name="Kaji N."/>
            <person name="Ohashi K."/>
            <person name="Shuin M."/>
            <person name="Niwa R."/>
            <person name="Uemura T."/>
            <person name="Mizuno K."/>
        </authorList>
    </citation>
    <scope>FUNCTION</scope>
    <scope>SUBCELLULAR LOCATION</scope>
    <scope>PHOSPHORYLATION</scope>
    <scope>MUTAGENESIS OF CYS-393</scope>
</reference>
<reference key="7">
    <citation type="journal article" date="2003" name="J. Neurosci.">
        <title>Control of growth cone motility and morphology by LIM kinase and Slingshot via phosphorylation and dephosphorylation of cofilin.</title>
        <authorList>
            <person name="Endo M."/>
            <person name="Ohashi K."/>
            <person name="Sasaki Y."/>
            <person name="Goshima Y."/>
            <person name="Niwa R."/>
            <person name="Uemura T."/>
            <person name="Mizuno K."/>
        </authorList>
    </citation>
    <scope>FUNCTION</scope>
    <scope>MUTAGENESIS OF CYS-393</scope>
</reference>
<reference key="8">
    <citation type="journal article" date="2004" name="Cell. Microbiol.">
        <title>Efficient Salmonella entry requires activity cycles of host ADF and cofilin.</title>
        <authorList>
            <person name="Dai S."/>
            <person name="Sarmiere P.D."/>
            <person name="Wiggan O."/>
            <person name="Bamburg J.R."/>
            <person name="Zhou D."/>
        </authorList>
    </citation>
    <scope>FUNCTION</scope>
    <scope>SUBCELLULAR LOCATION</scope>
    <scope>MUTAGENESIS OF CYS-393</scope>
</reference>
<reference key="9">
    <citation type="journal article" date="2004" name="J. Biol. Chem.">
        <title>Phosphoinositide 3-kinase-mediated activation of cofilin phosphatase Slingshot and its role for insulin-induced membrane protrusion.</title>
        <authorList>
            <person name="Nishita M."/>
            <person name="Wang Y."/>
            <person name="Tomizawa C."/>
            <person name="Suzuki A."/>
            <person name="Niwa R."/>
            <person name="Uemura T."/>
            <person name="Mizuno K."/>
        </authorList>
    </citation>
    <scope>FUNCTION</scope>
    <scope>SUBCELLULAR LOCATION</scope>
</reference>
<reference key="10">
    <citation type="journal article" date="2004" name="J. Cell Biol.">
        <title>A pathway of neuregulin-induced activation of cofilin-phosphatase Slingshot and cofilin in lamellipodia.</title>
        <authorList>
            <person name="Nagata-Ohashi K."/>
            <person name="Ohta Y."/>
            <person name="Goto K."/>
            <person name="Chiba S."/>
            <person name="Mori R."/>
            <person name="Nishita M."/>
            <person name="Ohashi K."/>
            <person name="Kousaka K."/>
            <person name="Iwamatsu A."/>
            <person name="Niwa R."/>
            <person name="Uemura T."/>
            <person name="Mizuno K."/>
        </authorList>
    </citation>
    <scope>FUNCTION</scope>
    <scope>INTERACTION WITH YWHAB; YWHAG; YWHAQ AND YWHAZ</scope>
    <scope>SUBCELLULAR LOCATION</scope>
    <scope>PHOSPHORYLATION AT SER-978</scope>
    <scope>MUTAGENESIS OF CYS-393; SER-937 AND SER-978</scope>
</reference>
<reference key="11">
    <citation type="journal article" date="2005" name="EMBO J.">
        <title>Interplay between components of a novel LIM kinase-slingshot phosphatase complex regulates cofilin.</title>
        <authorList>
            <person name="Soosairajah J."/>
            <person name="Maiti S."/>
            <person name="Wiggan O."/>
            <person name="Sarmiere P."/>
            <person name="Moussi N."/>
            <person name="Sarcevic B."/>
            <person name="Sampath R."/>
            <person name="Bamburg J.R."/>
            <person name="Bernard O."/>
        </authorList>
    </citation>
    <scope>FUNCTION</scope>
    <scope>INTERACTION WITH ACTIN; LIMK1 AND YWHAZ</scope>
    <scope>PHOSPHORYLATION</scope>
    <scope>MUTAGENESIS OF CYS-393</scope>
</reference>
<reference key="12">
    <citation type="journal article" date="2005" name="J. Biol. Chem.">
        <title>Calcium signal-induced cofilin dephosphorylation is mediated by Slingshot via calcineurin.</title>
        <authorList>
            <person name="Wang Y."/>
            <person name="Shibasaki F."/>
            <person name="Mizuno K."/>
        </authorList>
    </citation>
    <scope>FUNCTION</scope>
    <scope>PHOSPHORYLATION</scope>
    <scope>DEPHOSPHORYLATION BY PPP3CA</scope>
    <scope>MUTAGENESIS OF CYS-393</scope>
</reference>
<reference key="13">
    <citation type="journal article" date="2005" name="J. Cell Biol.">
        <title>Spatial and temporal regulation of cofilin activity by LIM kinase and Slingshot is critical for directional cell migration.</title>
        <authorList>
            <person name="Nishita M."/>
            <person name="Tomizawa C."/>
            <person name="Yamamoto M."/>
            <person name="Horita Y."/>
            <person name="Ohashi K."/>
            <person name="Mizuno K."/>
        </authorList>
    </citation>
    <scope>FUNCTION</scope>
    <scope>SUBCELLULAR LOCATION</scope>
    <scope>MUTAGENESIS OF CYS-393 AND TRP-458</scope>
</reference>
<reference key="14">
    <citation type="journal article" date="2008" name="Proc. Natl. Acad. Sci. U.S.A.">
        <title>A quantitative atlas of mitotic phosphorylation.</title>
        <authorList>
            <person name="Dephoure N."/>
            <person name="Zhou C."/>
            <person name="Villen J."/>
            <person name="Beausoleil S.A."/>
            <person name="Bakalarski C.E."/>
            <person name="Elledge S.J."/>
            <person name="Gygi S.P."/>
        </authorList>
    </citation>
    <scope>IDENTIFICATION BY MASS SPECTROMETRY [LARGE SCALE ANALYSIS]</scope>
    <source>
        <tissue>Cervix carcinoma</tissue>
    </source>
</reference>
<reference key="15">
    <citation type="journal article" date="2009" name="Anal. Chem.">
        <title>Lys-N and trypsin cover complementary parts of the phosphoproteome in a refined SCX-based approach.</title>
        <authorList>
            <person name="Gauci S."/>
            <person name="Helbig A.O."/>
            <person name="Slijper M."/>
            <person name="Krijgsveld J."/>
            <person name="Heck A.J."/>
            <person name="Mohammed S."/>
        </authorList>
    </citation>
    <scope>ACETYLATION [LARGE SCALE ANALYSIS] AT ALA-2</scope>
    <scope>CLEAVAGE OF INITIATOR METHIONINE [LARGE SCALE ANALYSIS]</scope>
    <scope>IDENTIFICATION BY MASS SPECTROMETRY [LARGE SCALE ANALYSIS]</scope>
</reference>
<reference key="16">
    <citation type="journal article" date="2010" name="Sci. Signal.">
        <title>Quantitative phosphoproteomics reveals widespread full phosphorylation site occupancy during mitosis.</title>
        <authorList>
            <person name="Olsen J.V."/>
            <person name="Vermeulen M."/>
            <person name="Santamaria A."/>
            <person name="Kumar C."/>
            <person name="Miller M.L."/>
            <person name="Jensen L.J."/>
            <person name="Gnad F."/>
            <person name="Cox J."/>
            <person name="Jensen T.S."/>
            <person name="Nigg E.A."/>
            <person name="Brunak S."/>
            <person name="Mann M."/>
        </authorList>
    </citation>
    <scope>PHOSPHORYLATION [LARGE SCALE ANALYSIS] AT SER-37 AND SER-57</scope>
    <scope>IDENTIFICATION BY MASS SPECTROMETRY [LARGE SCALE ANALYSIS]</scope>
    <source>
        <tissue>Cervix carcinoma</tissue>
    </source>
</reference>
<reference key="17">
    <citation type="journal article" date="2013" name="J. Proteome Res.">
        <title>Toward a comprehensive characterization of a human cancer cell phosphoproteome.</title>
        <authorList>
            <person name="Zhou H."/>
            <person name="Di Palma S."/>
            <person name="Preisinger C."/>
            <person name="Peng M."/>
            <person name="Polat A.N."/>
            <person name="Heck A.J."/>
            <person name="Mohammed S."/>
        </authorList>
    </citation>
    <scope>PHOSPHORYLATION [LARGE SCALE ANALYSIS] AT SER-576 AND SER-897</scope>
    <scope>IDENTIFICATION BY MASS SPECTROMETRY [LARGE SCALE ANALYSIS]</scope>
    <source>
        <tissue>Cervix carcinoma</tissue>
        <tissue>Erythroleukemia</tissue>
    </source>
</reference>
<reference key="18">
    <citation type="journal article" date="2014" name="J. Proteomics">
        <title>An enzyme assisted RP-RPLC approach for in-depth analysis of human liver phosphoproteome.</title>
        <authorList>
            <person name="Bian Y."/>
            <person name="Song C."/>
            <person name="Cheng K."/>
            <person name="Dong M."/>
            <person name="Wang F."/>
            <person name="Huang J."/>
            <person name="Sun D."/>
            <person name="Wang L."/>
            <person name="Ye M."/>
            <person name="Zou H."/>
        </authorList>
    </citation>
    <scope>IDENTIFICATION BY MASS SPECTROMETRY [LARGE SCALE ANALYSIS]</scope>
    <source>
        <tissue>Liver</tissue>
    </source>
</reference>
<accession>Q8WYL5</accession>
<accession>Q6P6C0</accession>
<accession>Q8N9A7</accession>
<accession>Q8WYL3</accession>
<accession>Q8WYL4</accession>
<accession>Q9P2P8</accession>
<feature type="initiator methionine" description="Removed" evidence="21">
    <location>
        <position position="1"/>
    </location>
</feature>
<feature type="chain" id="PRO_0000094841" description="Protein phosphatase Slingshot homolog 1">
    <location>
        <begin position="2"/>
        <end position="1049"/>
    </location>
</feature>
<feature type="domain" description="DEK-C" evidence="3">
    <location>
        <begin position="249"/>
        <end position="304"/>
    </location>
</feature>
<feature type="domain" description="Tyrosine-protein phosphatase" evidence="2">
    <location>
        <begin position="308"/>
        <end position="449"/>
    </location>
</feature>
<feature type="region of interest" description="Disordered" evidence="5">
    <location>
        <begin position="1"/>
        <end position="28"/>
    </location>
</feature>
<feature type="region of interest" description="Disordered" evidence="5">
    <location>
        <begin position="456"/>
        <end position="499"/>
    </location>
</feature>
<feature type="region of interest" description="Disordered" evidence="5">
    <location>
        <begin position="544"/>
        <end position="603"/>
    </location>
</feature>
<feature type="region of interest" description="Disordered" evidence="5">
    <location>
        <begin position="693"/>
        <end position="787"/>
    </location>
</feature>
<feature type="region of interest" description="Disordered" evidence="5">
    <location>
        <begin position="825"/>
        <end position="899"/>
    </location>
</feature>
<feature type="region of interest" description="Interaction with YWHAG" evidence="12">
    <location>
        <begin position="897"/>
        <end position="1049"/>
    </location>
</feature>
<feature type="region of interest" description="Disordered" evidence="5">
    <location>
        <begin position="923"/>
        <end position="955"/>
    </location>
</feature>
<feature type="region of interest" description="Disordered" evidence="5">
    <location>
        <begin position="989"/>
        <end position="1049"/>
    </location>
</feature>
<feature type="compositionally biased region" description="Polar residues" evidence="5">
    <location>
        <begin position="1"/>
        <end position="12"/>
    </location>
</feature>
<feature type="compositionally biased region" description="Low complexity" evidence="5">
    <location>
        <begin position="13"/>
        <end position="25"/>
    </location>
</feature>
<feature type="compositionally biased region" description="Polar residues" evidence="5">
    <location>
        <begin position="458"/>
        <end position="468"/>
    </location>
</feature>
<feature type="compositionally biased region" description="Basic and acidic residues" evidence="5">
    <location>
        <begin position="564"/>
        <end position="573"/>
    </location>
</feature>
<feature type="compositionally biased region" description="Low complexity" evidence="5">
    <location>
        <begin position="731"/>
        <end position="742"/>
    </location>
</feature>
<feature type="compositionally biased region" description="Basic and acidic residues" evidence="5">
    <location>
        <begin position="772"/>
        <end position="787"/>
    </location>
</feature>
<feature type="compositionally biased region" description="Low complexity" evidence="5">
    <location>
        <begin position="925"/>
        <end position="943"/>
    </location>
</feature>
<feature type="compositionally biased region" description="Polar residues" evidence="5">
    <location>
        <begin position="1001"/>
        <end position="1013"/>
    </location>
</feature>
<feature type="active site" description="Phosphocysteine intermediate" evidence="2">
    <location>
        <position position="393"/>
    </location>
</feature>
<feature type="modified residue" description="N-acetylalanine" evidence="21">
    <location>
        <position position="2"/>
    </location>
</feature>
<feature type="modified residue" description="Phosphoserine" evidence="22">
    <location>
        <position position="37"/>
    </location>
</feature>
<feature type="modified residue" description="Phosphoserine" evidence="22">
    <location>
        <position position="57"/>
    </location>
</feature>
<feature type="modified residue" description="Phosphoserine" evidence="1">
    <location>
        <position position="515"/>
    </location>
</feature>
<feature type="modified residue" description="Phosphoserine" evidence="23">
    <location>
        <position position="576"/>
    </location>
</feature>
<feature type="modified residue" description="Phosphoserine" evidence="23">
    <location>
        <position position="897"/>
    </location>
</feature>
<feature type="modified residue" description="Phosphoserine" evidence="12">
    <location>
        <position position="978"/>
    </location>
</feature>
<feature type="splice variant" id="VSP_016311" description="In isoform 4." evidence="16">
    <location>
        <begin position="1"/>
        <end position="312"/>
    </location>
</feature>
<feature type="splice variant" id="VSP_016312" description="In isoform 3." evidence="17">
    <location>
        <begin position="1"/>
        <end position="73"/>
    </location>
</feature>
<feature type="splice variant" id="VSP_016313" description="In isoform 5." evidence="18">
    <original>MALVTLQRSPTPSAASSSASNSELEAGSEEDRKLNLS</original>
    <variation>MARARRAVVGSVRDVSTAATNLFYFTDFCIFLQPTHCFCCPEVSSSNY</variation>
    <location>
        <begin position="1"/>
        <end position="37"/>
    </location>
</feature>
<feature type="splice variant" id="VSP_016314" description="In isoform 3." evidence="17">
    <original>LPQHLQVMINLLRCEDRIKL</original>
    <variation>MGGRHHLQRQVSESMSALFQ</variation>
    <location>
        <begin position="74"/>
        <end position="93"/>
    </location>
</feature>
<feature type="splice variant" id="VSP_016315" description="In isoform 3." evidence="17">
    <location>
        <begin position="135"/>
        <end position="157"/>
    </location>
</feature>
<feature type="splice variant" id="VSP_016316" description="In isoform 3." evidence="17">
    <location>
        <begin position="245"/>
        <end position="1049"/>
    </location>
</feature>
<feature type="splice variant" id="VSP_016317" description="In isoform 4." evidence="16">
    <original>FDHLYLGSEWNASNLEELQGSG</original>
    <variation>MRCYLSWDRWTSPPLSSIIFIS</variation>
    <location>
        <begin position="313"/>
        <end position="334"/>
    </location>
</feature>
<feature type="splice variant" id="VSP_016318" description="In isoform 2 and isoform 5." evidence="17 18">
    <original>DDAIFGILNKVKPSYKSCADCMYPTASGAPEASRERCEDPNAPAICTQPAFLPHITSSPVA</original>
    <variation>VGRARPAGWHTPSLPSHSNWPTSASVVGTTGTRHHTQLIFFYCLLWAPSSHLQGPEGSFTG</variation>
    <location>
        <begin position="632"/>
        <end position="692"/>
    </location>
</feature>
<feature type="splice variant" id="VSP_016319" description="In isoform 2 and isoform 5." evidence="17 18">
    <location>
        <begin position="693"/>
        <end position="1049"/>
    </location>
</feature>
<feature type="mutagenesis site" description="Abrogates phosphatase activity." evidence="6 7 8 11 12 13 14 15">
    <original>C</original>
    <variation>S</variation>
    <location>
        <position position="393"/>
    </location>
</feature>
<feature type="mutagenesis site" description="Impairs stimulation of phosphatase activity by actin but does not affect basal activity." evidence="15">
    <original>W</original>
    <variation>A</variation>
    <location>
        <position position="458"/>
    </location>
</feature>
<feature type="mutagenesis site" description="Reduces binding to YWHAB, YWHAG, YWHAQ and YWHAZ. Abolishes binding to YWHAB, YWHAG, YWHAQ and YWHAZ and increases association with F-actin; when associated with A-978." evidence="12">
    <original>S</original>
    <variation>A</variation>
    <location>
        <position position="937"/>
    </location>
</feature>
<feature type="mutagenesis site" description="Reduces binding to YWHAB, YWHAG, YWHAQ and YWHAZ. Abolishes binding to YWHAB, YWHAG, YWHAQ and YWHAZ and increases association with F-actin; when associated with A-937." evidence="12">
    <original>S</original>
    <variation>A</variation>
    <location>
        <position position="978"/>
    </location>
</feature>
<feature type="sequence conflict" description="In Ref. 4; AAH62341." evidence="19" ref="4">
    <original>A</original>
    <variation>V</variation>
    <location>
        <position position="2"/>
    </location>
</feature>
<feature type="sequence conflict" description="In Ref. 1; BAB84116." evidence="19" ref="1">
    <original>L</original>
    <variation>P</variation>
    <location>
        <position position="230"/>
    </location>
</feature>
<protein>
    <recommendedName>
        <fullName evidence="19">Protein phosphatase Slingshot homolog 1</fullName>
        <ecNumber evidence="6">3.1.3.16</ecNumber>
        <ecNumber evidence="4">3.1.3.48</ecNumber>
    </recommendedName>
    <alternativeName>
        <fullName>SSH-like protein 1</fullName>
        <shortName>SSH-1L</shortName>
        <shortName>hSSH-1L</shortName>
    </alternativeName>
</protein>
<name>SSH1_HUMAN</name>
<evidence type="ECO:0000250" key="1">
    <source>
        <dbReference type="UniProtKB" id="Q76I79"/>
    </source>
</evidence>
<evidence type="ECO:0000255" key="2">
    <source>
        <dbReference type="PROSITE-ProRule" id="PRU00160"/>
    </source>
</evidence>
<evidence type="ECO:0000255" key="3">
    <source>
        <dbReference type="PROSITE-ProRule" id="PRU01342"/>
    </source>
</evidence>
<evidence type="ECO:0000255" key="4">
    <source>
        <dbReference type="PROSITE-ProRule" id="PRU10044"/>
    </source>
</evidence>
<evidence type="ECO:0000256" key="5">
    <source>
        <dbReference type="SAM" id="MobiDB-lite"/>
    </source>
</evidence>
<evidence type="ECO:0000269" key="6">
    <source>
    </source>
</evidence>
<evidence type="ECO:0000269" key="7">
    <source>
    </source>
</evidence>
<evidence type="ECO:0000269" key="8">
    <source>
    </source>
</evidence>
<evidence type="ECO:0000269" key="9">
    <source>
    </source>
</evidence>
<evidence type="ECO:0000269" key="10">
    <source>
    </source>
</evidence>
<evidence type="ECO:0000269" key="11">
    <source>
    </source>
</evidence>
<evidence type="ECO:0000269" key="12">
    <source>
    </source>
</evidence>
<evidence type="ECO:0000269" key="13">
    <source>
    </source>
</evidence>
<evidence type="ECO:0000269" key="14">
    <source>
    </source>
</evidence>
<evidence type="ECO:0000269" key="15">
    <source>
    </source>
</evidence>
<evidence type="ECO:0000303" key="16">
    <source>
    </source>
</evidence>
<evidence type="ECO:0000303" key="17">
    <source>
    </source>
</evidence>
<evidence type="ECO:0000303" key="18">
    <source>
    </source>
</evidence>
<evidence type="ECO:0000305" key="19"/>
<evidence type="ECO:0000312" key="20">
    <source>
        <dbReference type="HGNC" id="HGNC:30579"/>
    </source>
</evidence>
<evidence type="ECO:0007744" key="21">
    <source>
    </source>
</evidence>
<evidence type="ECO:0007744" key="22">
    <source>
    </source>
</evidence>
<evidence type="ECO:0007744" key="23">
    <source>
    </source>
</evidence>
<dbReference type="EC" id="3.1.3.16" evidence="6"/>
<dbReference type="EC" id="3.1.3.48" evidence="4"/>
<dbReference type="EMBL" id="AB072355">
    <property type="protein sequence ID" value="BAB84114.1"/>
    <property type="molecule type" value="mRNA"/>
</dbReference>
<dbReference type="EMBL" id="AB072356">
    <property type="protein sequence ID" value="BAB84115.1"/>
    <property type="molecule type" value="mRNA"/>
</dbReference>
<dbReference type="EMBL" id="AB072357">
    <property type="protein sequence ID" value="BAB84116.1"/>
    <property type="molecule type" value="mRNA"/>
</dbReference>
<dbReference type="EMBL" id="AB037719">
    <property type="protein sequence ID" value="BAA92536.1"/>
    <property type="status" value="ALT_INIT"/>
    <property type="molecule type" value="mRNA"/>
</dbReference>
<dbReference type="EMBL" id="AK095421">
    <property type="protein sequence ID" value="BAC04546.1"/>
    <property type="molecule type" value="mRNA"/>
</dbReference>
<dbReference type="EMBL" id="BC062341">
    <property type="protein sequence ID" value="AAH62341.1"/>
    <property type="molecule type" value="mRNA"/>
</dbReference>
<dbReference type="CCDS" id="CCDS53825.1">
    <molecule id="Q8WYL5-5"/>
</dbReference>
<dbReference type="CCDS" id="CCDS55882.1">
    <molecule id="Q8WYL5-2"/>
</dbReference>
<dbReference type="CCDS" id="CCDS9121.1">
    <molecule id="Q8WYL5-1"/>
</dbReference>
<dbReference type="RefSeq" id="NP_001154802.1">
    <molecule id="Q8WYL5-2"/>
    <property type="nucleotide sequence ID" value="NM_001161330.2"/>
</dbReference>
<dbReference type="RefSeq" id="NP_001154803.1">
    <molecule id="Q8WYL5-5"/>
    <property type="nucleotide sequence ID" value="NM_001161331.1"/>
</dbReference>
<dbReference type="RefSeq" id="NP_061857.3">
    <molecule id="Q8WYL5-1"/>
    <property type="nucleotide sequence ID" value="NM_018984.3"/>
</dbReference>
<dbReference type="RefSeq" id="XP_016874982.1">
    <property type="nucleotide sequence ID" value="XM_017019493.1"/>
</dbReference>
<dbReference type="RefSeq" id="XP_016874983.1">
    <property type="nucleotide sequence ID" value="XM_017019494.1"/>
</dbReference>
<dbReference type="RefSeq" id="XP_047284982.1">
    <molecule id="Q8WYL5-4"/>
    <property type="nucleotide sequence ID" value="XM_047429026.1"/>
</dbReference>
<dbReference type="RefSeq" id="XP_054228304.1">
    <molecule id="Q8WYL5-4"/>
    <property type="nucleotide sequence ID" value="XM_054372329.1"/>
</dbReference>
<dbReference type="SMR" id="Q8WYL5"/>
<dbReference type="BioGRID" id="119950">
    <property type="interactions" value="80"/>
</dbReference>
<dbReference type="CORUM" id="Q8WYL5"/>
<dbReference type="FunCoup" id="Q8WYL5">
    <property type="interactions" value="1088"/>
</dbReference>
<dbReference type="IntAct" id="Q8WYL5">
    <property type="interactions" value="37"/>
</dbReference>
<dbReference type="MINT" id="Q8WYL5"/>
<dbReference type="STRING" id="9606.ENSP00000315713"/>
<dbReference type="DEPOD" id="SSH1"/>
<dbReference type="GlyGen" id="Q8WYL5">
    <property type="glycosylation" value="2 sites"/>
</dbReference>
<dbReference type="iPTMnet" id="Q8WYL5"/>
<dbReference type="PhosphoSitePlus" id="Q8WYL5"/>
<dbReference type="SwissPalm" id="Q8WYL5"/>
<dbReference type="BioMuta" id="SSH1"/>
<dbReference type="DMDM" id="82582267"/>
<dbReference type="jPOST" id="Q8WYL5"/>
<dbReference type="MassIVE" id="Q8WYL5"/>
<dbReference type="PaxDb" id="9606-ENSP00000315713"/>
<dbReference type="PeptideAtlas" id="Q8WYL5"/>
<dbReference type="ProteomicsDB" id="75168">
    <molecule id="Q8WYL5-1"/>
</dbReference>
<dbReference type="ProteomicsDB" id="75169">
    <molecule id="Q8WYL5-2"/>
</dbReference>
<dbReference type="ProteomicsDB" id="75170">
    <molecule id="Q8WYL5-3"/>
</dbReference>
<dbReference type="ProteomicsDB" id="75171">
    <molecule id="Q8WYL5-4"/>
</dbReference>
<dbReference type="ProteomicsDB" id="75172">
    <molecule id="Q8WYL5-5"/>
</dbReference>
<dbReference type="Pumba" id="Q8WYL5"/>
<dbReference type="Antibodypedia" id="18311">
    <property type="antibodies" value="230 antibodies from 25 providers"/>
</dbReference>
<dbReference type="DNASU" id="54434"/>
<dbReference type="Ensembl" id="ENST00000326470.9">
    <molecule id="Q8WYL5-5"/>
    <property type="protein sequence ID" value="ENSP00000326107.5"/>
    <property type="gene ID" value="ENSG00000084112.15"/>
</dbReference>
<dbReference type="Ensembl" id="ENST00000326495.10">
    <molecule id="Q8WYL5-1"/>
    <property type="protein sequence ID" value="ENSP00000315713.5"/>
    <property type="gene ID" value="ENSG00000084112.15"/>
</dbReference>
<dbReference type="Ensembl" id="ENST00000551165.5">
    <molecule id="Q8WYL5-2"/>
    <property type="protein sequence ID" value="ENSP00000448824.1"/>
    <property type="gene ID" value="ENSG00000084112.15"/>
</dbReference>
<dbReference type="GeneID" id="54434"/>
<dbReference type="KEGG" id="hsa:54434"/>
<dbReference type="MANE-Select" id="ENST00000326495.10">
    <property type="protein sequence ID" value="ENSP00000315713.5"/>
    <property type="RefSeq nucleotide sequence ID" value="NM_018984.4"/>
    <property type="RefSeq protein sequence ID" value="NP_061857.3"/>
</dbReference>
<dbReference type="UCSC" id="uc001tnm.4">
    <molecule id="Q8WYL5-1"/>
    <property type="organism name" value="human"/>
</dbReference>
<dbReference type="AGR" id="HGNC:30579"/>
<dbReference type="CTD" id="54434"/>
<dbReference type="DisGeNET" id="54434"/>
<dbReference type="GeneCards" id="SSH1"/>
<dbReference type="HGNC" id="HGNC:30579">
    <property type="gene designation" value="SSH1"/>
</dbReference>
<dbReference type="HPA" id="ENSG00000084112">
    <property type="expression patterns" value="Low tissue specificity"/>
</dbReference>
<dbReference type="MIM" id="606778">
    <property type="type" value="gene"/>
</dbReference>
<dbReference type="neXtProt" id="NX_Q8WYL5"/>
<dbReference type="OpenTargets" id="ENSG00000084112"/>
<dbReference type="PharmGKB" id="PA134941788"/>
<dbReference type="VEuPathDB" id="HostDB:ENSG00000084112"/>
<dbReference type="eggNOG" id="KOG1716">
    <property type="taxonomic scope" value="Eukaryota"/>
</dbReference>
<dbReference type="GeneTree" id="ENSGT00940000156133"/>
<dbReference type="HOGENOM" id="CLU_006650_1_0_1"/>
<dbReference type="InParanoid" id="Q8WYL5"/>
<dbReference type="OMA" id="ADCMYPP"/>
<dbReference type="OrthoDB" id="5779068at2759"/>
<dbReference type="PAN-GO" id="Q8WYL5">
    <property type="GO annotations" value="5 GO annotations based on evolutionary models"/>
</dbReference>
<dbReference type="PhylomeDB" id="Q8WYL5"/>
<dbReference type="TreeFam" id="TF319444"/>
<dbReference type="PathwayCommons" id="Q8WYL5"/>
<dbReference type="SignaLink" id="Q8WYL5"/>
<dbReference type="SIGNOR" id="Q8WYL5"/>
<dbReference type="BioGRID-ORCS" id="54434">
    <property type="hits" value="16 hits in 1173 CRISPR screens"/>
</dbReference>
<dbReference type="ChiTaRS" id="SSH1">
    <property type="organism name" value="human"/>
</dbReference>
<dbReference type="GeneWiki" id="SSH1"/>
<dbReference type="GenomeRNAi" id="54434"/>
<dbReference type="Pharos" id="Q8WYL5">
    <property type="development level" value="Tbio"/>
</dbReference>
<dbReference type="PRO" id="PR:Q8WYL5"/>
<dbReference type="Proteomes" id="UP000005640">
    <property type="component" value="Chromosome 12"/>
</dbReference>
<dbReference type="RNAct" id="Q8WYL5">
    <property type="molecule type" value="protein"/>
</dbReference>
<dbReference type="Bgee" id="ENSG00000084112">
    <property type="expression patterns" value="Expressed in sural nerve and 207 other cell types or tissues"/>
</dbReference>
<dbReference type="ExpressionAtlas" id="Q8WYL5">
    <property type="expression patterns" value="baseline and differential"/>
</dbReference>
<dbReference type="GO" id="GO:0032154">
    <property type="term" value="C:cleavage furrow"/>
    <property type="evidence" value="ECO:0007669"/>
    <property type="project" value="UniProtKB-SubCell"/>
</dbReference>
<dbReference type="GO" id="GO:0005737">
    <property type="term" value="C:cytoplasm"/>
    <property type="evidence" value="ECO:0000314"/>
    <property type="project" value="UniProtKB"/>
</dbReference>
<dbReference type="GO" id="GO:0005856">
    <property type="term" value="C:cytoskeleton"/>
    <property type="evidence" value="ECO:0007669"/>
    <property type="project" value="UniProtKB-SubCell"/>
</dbReference>
<dbReference type="GO" id="GO:0030426">
    <property type="term" value="C:growth cone"/>
    <property type="evidence" value="ECO:0007669"/>
    <property type="project" value="Ensembl"/>
</dbReference>
<dbReference type="GO" id="GO:0030027">
    <property type="term" value="C:lamellipodium"/>
    <property type="evidence" value="ECO:0007669"/>
    <property type="project" value="UniProtKB-SubCell"/>
</dbReference>
<dbReference type="GO" id="GO:0030496">
    <property type="term" value="C:midbody"/>
    <property type="evidence" value="ECO:0007669"/>
    <property type="project" value="UniProtKB-SubCell"/>
</dbReference>
<dbReference type="GO" id="GO:0005886">
    <property type="term" value="C:plasma membrane"/>
    <property type="evidence" value="ECO:0000314"/>
    <property type="project" value="UniProtKB"/>
</dbReference>
<dbReference type="GO" id="GO:0045202">
    <property type="term" value="C:synapse"/>
    <property type="evidence" value="ECO:0007669"/>
    <property type="project" value="GOC"/>
</dbReference>
<dbReference type="GO" id="GO:0003779">
    <property type="term" value="F:actin binding"/>
    <property type="evidence" value="ECO:0000314"/>
    <property type="project" value="UniProtKB"/>
</dbReference>
<dbReference type="GO" id="GO:0004721">
    <property type="term" value="F:phosphoprotein phosphatase activity"/>
    <property type="evidence" value="ECO:0000314"/>
    <property type="project" value="UniProtKB"/>
</dbReference>
<dbReference type="GO" id="GO:0004722">
    <property type="term" value="F:protein serine/threonine phosphatase activity"/>
    <property type="evidence" value="ECO:0007669"/>
    <property type="project" value="UniProtKB-EC"/>
</dbReference>
<dbReference type="GO" id="GO:0004725">
    <property type="term" value="F:protein tyrosine phosphatase activity"/>
    <property type="evidence" value="ECO:0007669"/>
    <property type="project" value="UniProtKB-EC"/>
</dbReference>
<dbReference type="GO" id="GO:0030036">
    <property type="term" value="P:actin cytoskeleton organization"/>
    <property type="evidence" value="ECO:0000315"/>
    <property type="project" value="UniProtKB"/>
</dbReference>
<dbReference type="GO" id="GO:0000902">
    <property type="term" value="P:cell morphogenesis"/>
    <property type="evidence" value="ECO:0000315"/>
    <property type="project" value="UniProtKB"/>
</dbReference>
<dbReference type="GO" id="GO:0071318">
    <property type="term" value="P:cellular response to ATP"/>
    <property type="evidence" value="ECO:0000314"/>
    <property type="project" value="MGI"/>
</dbReference>
<dbReference type="GO" id="GO:0098976">
    <property type="term" value="P:excitatory chemical synaptic transmission"/>
    <property type="evidence" value="ECO:0007669"/>
    <property type="project" value="Ensembl"/>
</dbReference>
<dbReference type="GO" id="GO:0030837">
    <property type="term" value="P:negative regulation of actin filament polymerization"/>
    <property type="evidence" value="ECO:0000318"/>
    <property type="project" value="GO_Central"/>
</dbReference>
<dbReference type="GO" id="GO:1904719">
    <property type="term" value="P:positive regulation of AMPA glutamate receptor clustering"/>
    <property type="evidence" value="ECO:0007669"/>
    <property type="project" value="Ensembl"/>
</dbReference>
<dbReference type="GO" id="GO:2000463">
    <property type="term" value="P:positive regulation of excitatory postsynaptic potential"/>
    <property type="evidence" value="ECO:0007669"/>
    <property type="project" value="Ensembl"/>
</dbReference>
<dbReference type="GO" id="GO:0031915">
    <property type="term" value="P:positive regulation of synaptic plasticity"/>
    <property type="evidence" value="ECO:0007669"/>
    <property type="project" value="Ensembl"/>
</dbReference>
<dbReference type="GO" id="GO:1904754">
    <property type="term" value="P:positive regulation of vascular associated smooth muscle cell migration"/>
    <property type="evidence" value="ECO:0007669"/>
    <property type="project" value="Ensembl"/>
</dbReference>
<dbReference type="GO" id="GO:0006470">
    <property type="term" value="P:protein dephosphorylation"/>
    <property type="evidence" value="ECO:0000315"/>
    <property type="project" value="UniProtKB"/>
</dbReference>
<dbReference type="GO" id="GO:0051246">
    <property type="term" value="P:regulation of protein metabolic process"/>
    <property type="evidence" value="ECO:0000314"/>
    <property type="project" value="MGI"/>
</dbReference>
<dbReference type="CDD" id="cd14570">
    <property type="entry name" value="DSP_slingshot_1"/>
    <property type="match status" value="1"/>
</dbReference>
<dbReference type="CDD" id="cd11652">
    <property type="entry name" value="SSH-N"/>
    <property type="match status" value="1"/>
</dbReference>
<dbReference type="FunFam" id="3.90.190.10:FF:000004">
    <property type="entry name" value="Protein phosphatase Slingshot homolog 2"/>
    <property type="match status" value="1"/>
</dbReference>
<dbReference type="FunFam" id="1.10.10.60:FF:000423">
    <property type="entry name" value="Slingshot protein phosphatase 1a"/>
    <property type="match status" value="1"/>
</dbReference>
<dbReference type="Gene3D" id="1.10.10.60">
    <property type="entry name" value="Homeodomain-like"/>
    <property type="match status" value="1"/>
</dbReference>
<dbReference type="Gene3D" id="3.90.190.10">
    <property type="entry name" value="Protein tyrosine phosphatase superfamily"/>
    <property type="match status" value="1"/>
</dbReference>
<dbReference type="InterPro" id="IPR014876">
    <property type="entry name" value="DEK_C"/>
</dbReference>
<dbReference type="InterPro" id="IPR027233">
    <property type="entry name" value="DSP_SSH1"/>
</dbReference>
<dbReference type="InterPro" id="IPR000340">
    <property type="entry name" value="Dual-sp_phosphatase_cat-dom"/>
</dbReference>
<dbReference type="InterPro" id="IPR043587">
    <property type="entry name" value="Phosphatase_SSH-like"/>
</dbReference>
<dbReference type="InterPro" id="IPR029021">
    <property type="entry name" value="Prot-tyrosine_phosphatase-like"/>
</dbReference>
<dbReference type="InterPro" id="IPR043588">
    <property type="entry name" value="SSH-N"/>
</dbReference>
<dbReference type="InterPro" id="IPR016130">
    <property type="entry name" value="Tyr_Pase_AS"/>
</dbReference>
<dbReference type="InterPro" id="IPR000387">
    <property type="entry name" value="Tyr_Pase_dom"/>
</dbReference>
<dbReference type="InterPro" id="IPR020422">
    <property type="entry name" value="TYR_PHOSPHATASE_DUAL_dom"/>
</dbReference>
<dbReference type="PANTHER" id="PTHR45864:SF5">
    <property type="entry name" value="PROTEIN PHOSPHATASE SLINGSHOT HOMOLOG 1"/>
    <property type="match status" value="1"/>
</dbReference>
<dbReference type="PANTHER" id="PTHR45864">
    <property type="entry name" value="SLINGSHOT PROTEIN PHOSPHATASE HOMOLOG"/>
    <property type="match status" value="1"/>
</dbReference>
<dbReference type="Pfam" id="PF08766">
    <property type="entry name" value="DEK_C"/>
    <property type="match status" value="1"/>
</dbReference>
<dbReference type="Pfam" id="PF00782">
    <property type="entry name" value="DSPc"/>
    <property type="match status" value="1"/>
</dbReference>
<dbReference type="Pfam" id="PF23040">
    <property type="entry name" value="PH_SSH1-like_1st"/>
    <property type="match status" value="1"/>
</dbReference>
<dbReference type="SMART" id="SM00195">
    <property type="entry name" value="DSPc"/>
    <property type="match status" value="1"/>
</dbReference>
<dbReference type="SUPFAM" id="SSF52799">
    <property type="entry name" value="(Phosphotyrosine protein) phosphatases II"/>
    <property type="match status" value="1"/>
</dbReference>
<dbReference type="SUPFAM" id="SSF109715">
    <property type="entry name" value="DEK C-terminal domain"/>
    <property type="match status" value="1"/>
</dbReference>
<dbReference type="PROSITE" id="PS51998">
    <property type="entry name" value="DEK_C"/>
    <property type="match status" value="1"/>
</dbReference>
<dbReference type="PROSITE" id="PS00383">
    <property type="entry name" value="TYR_PHOSPHATASE_1"/>
    <property type="match status" value="1"/>
</dbReference>
<dbReference type="PROSITE" id="PS50056">
    <property type="entry name" value="TYR_PHOSPHATASE_2"/>
    <property type="match status" value="1"/>
</dbReference>
<dbReference type="PROSITE" id="PS50054">
    <property type="entry name" value="TYR_PHOSPHATASE_DUAL"/>
    <property type="match status" value="1"/>
</dbReference>
<organism>
    <name type="scientific">Homo sapiens</name>
    <name type="common">Human</name>
    <dbReference type="NCBI Taxonomy" id="9606"/>
    <lineage>
        <taxon>Eukaryota</taxon>
        <taxon>Metazoa</taxon>
        <taxon>Chordata</taxon>
        <taxon>Craniata</taxon>
        <taxon>Vertebrata</taxon>
        <taxon>Euteleostomi</taxon>
        <taxon>Mammalia</taxon>
        <taxon>Eutheria</taxon>
        <taxon>Euarchontoglires</taxon>
        <taxon>Primates</taxon>
        <taxon>Haplorrhini</taxon>
        <taxon>Catarrhini</taxon>
        <taxon>Hominidae</taxon>
        <taxon>Homo</taxon>
    </lineage>
</organism>
<proteinExistence type="evidence at protein level"/>
<comment type="function">
    <text evidence="6 7 8 9 10 11 12 13 14 15">Protein phosphatase which regulates actin filament dynamics. Dephosphorylates and activates the actin binding/depolymerizing factor cofilin, which subsequently binds to actin filaments and stimulates their disassembly. Inhibitory phosphorylation of cofilin is mediated by LIMK1, which may also be dephosphorylated and inactivated by this protein.</text>
</comment>
<comment type="catalytic activity">
    <reaction evidence="4">
        <text>O-phospho-L-tyrosyl-[protein] + H2O = L-tyrosyl-[protein] + phosphate</text>
        <dbReference type="Rhea" id="RHEA:10684"/>
        <dbReference type="Rhea" id="RHEA-COMP:10136"/>
        <dbReference type="Rhea" id="RHEA-COMP:20101"/>
        <dbReference type="ChEBI" id="CHEBI:15377"/>
        <dbReference type="ChEBI" id="CHEBI:43474"/>
        <dbReference type="ChEBI" id="CHEBI:46858"/>
        <dbReference type="ChEBI" id="CHEBI:61978"/>
        <dbReference type="EC" id="3.1.3.48"/>
    </reaction>
</comment>
<comment type="catalytic activity">
    <reaction evidence="6">
        <text>O-phospho-L-seryl-[protein] + H2O = L-seryl-[protein] + phosphate</text>
        <dbReference type="Rhea" id="RHEA:20629"/>
        <dbReference type="Rhea" id="RHEA-COMP:9863"/>
        <dbReference type="Rhea" id="RHEA-COMP:11604"/>
        <dbReference type="ChEBI" id="CHEBI:15377"/>
        <dbReference type="ChEBI" id="CHEBI:29999"/>
        <dbReference type="ChEBI" id="CHEBI:43474"/>
        <dbReference type="ChEBI" id="CHEBI:83421"/>
        <dbReference type="EC" id="3.1.3.16"/>
    </reaction>
</comment>
<comment type="catalytic activity">
    <reaction>
        <text>O-phospho-L-threonyl-[protein] + H2O = L-threonyl-[protein] + phosphate</text>
        <dbReference type="Rhea" id="RHEA:47004"/>
        <dbReference type="Rhea" id="RHEA-COMP:11060"/>
        <dbReference type="Rhea" id="RHEA-COMP:11605"/>
        <dbReference type="ChEBI" id="CHEBI:15377"/>
        <dbReference type="ChEBI" id="CHEBI:30013"/>
        <dbReference type="ChEBI" id="CHEBI:43474"/>
        <dbReference type="ChEBI" id="CHEBI:61977"/>
        <dbReference type="EC" id="3.1.3.16"/>
    </reaction>
</comment>
<comment type="subunit">
    <text evidence="6 9 12 13">Interacts with actin and this stimulates phosphatase activity. Also interacts with LIMK1 and with the 14-3-3 proteins YWHAB, YWHAG, YWHAQ, and YWHAZ. Interaction with 14-3-3 proteins inhibits phosphatase activity and also blocks recruitment to lamellipodia and stimulation by actin.</text>
</comment>
<comment type="interaction">
    <interactant intactId="EBI-1222387">
        <id>Q8WYL5</id>
    </interactant>
    <interactant intactId="EBI-352733">
        <id>P23528</id>
        <label>CFL1</label>
    </interactant>
    <organismsDiffer>false</organismsDiffer>
    <experiments>2</experiments>
</comment>
<comment type="interaction">
    <interactant intactId="EBI-1222387">
        <id>Q8WYL5</id>
    </interactant>
    <interactant intactId="EBI-351152">
        <id>Q9BR76</id>
        <label>CORO1B</label>
    </interactant>
    <organismsDiffer>false</organismsDiffer>
    <experiments>3</experiments>
</comment>
<comment type="interaction">
    <interactant intactId="EBI-1222387">
        <id>Q8WYL5</id>
    </interactant>
    <interactant intactId="EBI-444403">
        <id>P53667</id>
        <label>LIMK1</label>
    </interactant>
    <organismsDiffer>false</organismsDiffer>
    <experiments>6</experiments>
</comment>
<comment type="interaction">
    <interactant intactId="EBI-1222387">
        <id>Q8WYL5</id>
    </interactant>
    <interactant intactId="EBI-359815">
        <id>P31946</id>
        <label>YWHAB</label>
    </interactant>
    <organismsDiffer>false</organismsDiffer>
    <experiments>3</experiments>
</comment>
<comment type="interaction">
    <interactant intactId="EBI-1222387">
        <id>Q8WYL5</id>
    </interactant>
    <interactant intactId="EBI-359854">
        <id>P27348</id>
        <label>YWHAQ</label>
    </interactant>
    <organismsDiffer>false</organismsDiffer>
    <experiments>2</experiments>
</comment>
<comment type="subcellular location">
    <subcellularLocation>
        <location>Cytoplasm</location>
        <location>Cytoskeleton</location>
    </subcellularLocation>
    <subcellularLocation>
        <location>Cell projection</location>
        <location>Lamellipodium</location>
    </subcellularLocation>
    <subcellularLocation>
        <location>Cleavage furrow</location>
    </subcellularLocation>
    <subcellularLocation>
        <location>Midbody</location>
    </subcellularLocation>
    <text>Also recruited to actin rich membrane protrusions such as lamellipodia, which may allow local control of actin dynamics at sites of cell locomotion. Also localized to the cleavage furrow and the midbody during cytokinesis.</text>
</comment>
<comment type="alternative products">
    <event type="alternative splicing"/>
    <isoform>
        <id>Q8WYL5-1</id>
        <name>1</name>
        <name>L</name>
        <sequence type="displayed"/>
    </isoform>
    <isoform>
        <id>Q8WYL5-2</id>
        <name>2</name>
        <name>S</name>
        <sequence type="described" ref="VSP_016318 VSP_016319"/>
    </isoform>
    <isoform>
        <id>Q8WYL5-3</id>
        <name>3</name>
        <name>B</name>
        <sequence type="described" ref="VSP_016312 VSP_016314 VSP_016315 VSP_016316"/>
    </isoform>
    <isoform>
        <id>Q8WYL5-4</id>
        <name>4</name>
        <sequence type="described" ref="VSP_016311 VSP_016317"/>
    </isoform>
    <isoform>
        <id>Q8WYL5-5</id>
        <name>5</name>
        <sequence type="described" ref="VSP_016313 VSP_016318 VSP_016319"/>
    </isoform>
</comment>
<comment type="PTM">
    <text evidence="8 12 13 14">Phosphorylated. Inhibitory phosphorylation by PAK4 promotes binding to YWHAZ. Phosphorylation at Ser-978 is decreased by stimuli which promote actin reorganization and lamellipodia formation. Can be dephosphorylated and activated by PPP3CA/calcineurin A. Phosphorylation decreases immediately prior to telophase.</text>
</comment>
<comment type="miscellaneous">
    <text>Tyrosine phosphatase activity has not been demonstrated for this protein to date.</text>
</comment>
<comment type="miscellaneous">
    <molecule>Isoform 2</molecule>
    <text evidence="19">May be produced at very low levels due to a premature stop codon in the mRNA, leading to nonsense-mediated mRNA decay.</text>
</comment>
<comment type="miscellaneous">
    <molecule>Isoform 3</molecule>
    <text evidence="19">Due to intron retention.</text>
</comment>
<comment type="similarity">
    <text evidence="19">Belongs to the protein-tyrosine phosphatase family.</text>
</comment>
<comment type="sequence caution" evidence="19">
    <conflict type="erroneous initiation">
        <sequence resource="EMBL-CDS" id="BAA92536"/>
    </conflict>
    <text>Extended N-terminus.</text>
</comment>
<sequence>MALVTLQRSPTPSAASSSASNSELEAGSEEDRKLNLSLSESFFMVKGAALFLQQGSSPQGQRSLQHPHKHAGDLPQHLQVMINLLRCEDRIKLAVRLESAWADRVRYMVVVYSSGRQDTEENILLGVDFSSKESKSCTIGMVLRLWSDTKIHLDGDGGFSVSTAGRMHIFKPVSVQAMWSALQVLHKACEVARRHNYFPGGVALIWATYYESCISSEQSCINEWNAMQDLESTRPDSPALFVDKPTEGERTERLIKAKLRSIMMSQDLENVTSKEIRNELEKQMNCNLKELKEFIDNEMLLILGQMDKPSLIFDHLYLGSEWNASNLEELQGSGVDYILNVTREIDNFFPGLFAYHNIRVYDEETTDLLAHWNEAYHFINKAKRNHSKCLVHCKMGVSRSASTVIAYAMKEFGWPLEKAYNYVKQKRSITRPNAGFMRQLSEYEGILDASKQRHNKLWRQQTDSSLQQPVDDPAGPGDFLPETPDGTPESQLPFLDDAAQPGLGPPLPCCFRRLSDPLLPSPEDETGSLVHLEDPEREALLEEAAPPAEVHRPARQPQQGSGLCEKDVKKKLEFGSPKGRSGSLLQVEETEREEGLGAGRWGQLPTQLDQNLLNSENLNNNSKRSCPNGMEDDAIFGILNKVKPSYKSCADCMYPTASGAPEASRERCEDPNAPAICTQPAFLPHITSSPVAHLASRSRVPEKPASGPTEPPPFLPPAGSRRADTSGPGAGAALEPPASLLEPSRETPKVLPKSLLLKNSHCDKNPPSTEVVIKEESSPKKDMKPAKDLRLLFSNESEKPTTNSYLMQHQESIIQLQKAGLVRKHTKELERLKSVPADPAPPSRDGPASRLEASIPEESQDPAALHELGPLVMPSQAGSDEKSEAAPASLEGGSLKSPPPFFYRLDHTSSFSKDFLKTICYTPTSSSMSSNLTRSSSSDSIHSVRGKPGLVKQRTQEIETRLRLAGLTVSSPLKRSHSLAKLGSLTFSTEDLSSEADPSTVADSQDTTLSESSFLHEPQGTPRDPAATSKPSGKPAPENLKSPSWMSKS</sequence>
<keyword id="KW-0007">Acetylation</keyword>
<keyword id="KW-0009">Actin-binding</keyword>
<keyword id="KW-0025">Alternative splicing</keyword>
<keyword id="KW-0966">Cell projection</keyword>
<keyword id="KW-0963">Cytoplasm</keyword>
<keyword id="KW-0206">Cytoskeleton</keyword>
<keyword id="KW-0378">Hydrolase</keyword>
<keyword id="KW-0597">Phosphoprotein</keyword>
<keyword id="KW-0904">Protein phosphatase</keyword>
<keyword id="KW-1267">Proteomics identification</keyword>
<keyword id="KW-1185">Reference proteome</keyword>